<gene>
    <name evidence="6" type="primary">XKS1</name>
    <name type="ordered locus">YGR194C</name>
    <name type="ORF">G7584</name>
</gene>
<name>XKS1_YEAST</name>
<keyword id="KW-0067">ATP-binding</keyword>
<keyword id="KW-0119">Carbohydrate metabolism</keyword>
<keyword id="KW-0963">Cytoplasm</keyword>
<keyword id="KW-0418">Kinase</keyword>
<keyword id="KW-0547">Nucleotide-binding</keyword>
<keyword id="KW-0597">Phosphoprotein</keyword>
<keyword id="KW-1185">Reference proteome</keyword>
<keyword id="KW-0808">Transferase</keyword>
<keyword id="KW-0859">Xylose metabolism</keyword>
<proteinExistence type="evidence at protein level"/>
<dbReference type="EC" id="2.7.1.17" evidence="8"/>
<dbReference type="EMBL" id="Z72979">
    <property type="protein sequence ID" value="CAA97220.1"/>
    <property type="molecule type" value="Genomic_DNA"/>
</dbReference>
<dbReference type="EMBL" id="X82408">
    <property type="protein sequence ID" value="CAA57805.1"/>
    <property type="molecule type" value="Genomic_DNA"/>
</dbReference>
<dbReference type="EMBL" id="BK006941">
    <property type="protein sequence ID" value="DAA08287.1"/>
    <property type="molecule type" value="Genomic_DNA"/>
</dbReference>
<dbReference type="PIR" id="S64512">
    <property type="entry name" value="S64512"/>
</dbReference>
<dbReference type="RefSeq" id="NP_011710.3">
    <property type="nucleotide sequence ID" value="NM_001181323.3"/>
</dbReference>
<dbReference type="SMR" id="P42826"/>
<dbReference type="BioGRID" id="33447">
    <property type="interactions" value="96"/>
</dbReference>
<dbReference type="DIP" id="DIP-6764N"/>
<dbReference type="FunCoup" id="P42826">
    <property type="interactions" value="599"/>
</dbReference>
<dbReference type="IntAct" id="P42826">
    <property type="interactions" value="3"/>
</dbReference>
<dbReference type="STRING" id="4932.YGR194C"/>
<dbReference type="iPTMnet" id="P42826"/>
<dbReference type="PaxDb" id="4932-YGR194C"/>
<dbReference type="PeptideAtlas" id="P42826"/>
<dbReference type="EnsemblFungi" id="YGR194C_mRNA">
    <property type="protein sequence ID" value="YGR194C"/>
    <property type="gene ID" value="YGR194C"/>
</dbReference>
<dbReference type="GeneID" id="853108"/>
<dbReference type="KEGG" id="sce:YGR194C"/>
<dbReference type="AGR" id="SGD:S000003426"/>
<dbReference type="SGD" id="S000003426">
    <property type="gene designation" value="XKS1"/>
</dbReference>
<dbReference type="VEuPathDB" id="FungiDB:YGR194C"/>
<dbReference type="eggNOG" id="KOG2531">
    <property type="taxonomic scope" value="Eukaryota"/>
</dbReference>
<dbReference type="GeneTree" id="ENSGT01000000214434"/>
<dbReference type="HOGENOM" id="CLU_016149_5_0_1"/>
<dbReference type="InParanoid" id="P42826"/>
<dbReference type="OMA" id="NSCALGG"/>
<dbReference type="OrthoDB" id="1728974at2759"/>
<dbReference type="BioCyc" id="YEAST:YGR194C-MONOMER"/>
<dbReference type="BRENDA" id="2.7.1.17">
    <property type="organism ID" value="984"/>
</dbReference>
<dbReference type="Reactome" id="R-SCE-5661270">
    <property type="pathway name" value="Formation of xylulose-5-phosphate"/>
</dbReference>
<dbReference type="BioGRID-ORCS" id="853108">
    <property type="hits" value="1 hit in 10 CRISPR screens"/>
</dbReference>
<dbReference type="PRO" id="PR:P42826"/>
<dbReference type="Proteomes" id="UP000002311">
    <property type="component" value="Chromosome VII"/>
</dbReference>
<dbReference type="RNAct" id="P42826">
    <property type="molecule type" value="protein"/>
</dbReference>
<dbReference type="GO" id="GO:0005737">
    <property type="term" value="C:cytoplasm"/>
    <property type="evidence" value="ECO:0007005"/>
    <property type="project" value="SGD"/>
</dbReference>
<dbReference type="GO" id="GO:0005829">
    <property type="term" value="C:cytosol"/>
    <property type="evidence" value="ECO:0000318"/>
    <property type="project" value="GO_Central"/>
</dbReference>
<dbReference type="GO" id="GO:0005524">
    <property type="term" value="F:ATP binding"/>
    <property type="evidence" value="ECO:0007669"/>
    <property type="project" value="UniProtKB-KW"/>
</dbReference>
<dbReference type="GO" id="GO:0004856">
    <property type="term" value="F:D-xylulokinase activity"/>
    <property type="evidence" value="ECO:0000315"/>
    <property type="project" value="SGD"/>
</dbReference>
<dbReference type="GO" id="GO:0042732">
    <property type="term" value="P:D-xylose metabolic process"/>
    <property type="evidence" value="ECO:0007669"/>
    <property type="project" value="UniProtKB-KW"/>
</dbReference>
<dbReference type="GO" id="GO:0005998">
    <property type="term" value="P:xylulose catabolic process"/>
    <property type="evidence" value="ECO:0000314"/>
    <property type="project" value="SGD"/>
</dbReference>
<dbReference type="GO" id="GO:0005997">
    <property type="term" value="P:xylulose metabolic process"/>
    <property type="evidence" value="ECO:0000318"/>
    <property type="project" value="GO_Central"/>
</dbReference>
<dbReference type="CDD" id="cd07776">
    <property type="entry name" value="ASKHA_NBD_FGGY_SpXK-like"/>
    <property type="match status" value="1"/>
</dbReference>
<dbReference type="FunFam" id="3.30.420.40:FF:000246">
    <property type="entry name" value="Xks1p"/>
    <property type="match status" value="1"/>
</dbReference>
<dbReference type="Gene3D" id="3.30.420.40">
    <property type="match status" value="2"/>
</dbReference>
<dbReference type="InterPro" id="IPR043129">
    <property type="entry name" value="ATPase_NBD"/>
</dbReference>
<dbReference type="InterPro" id="IPR042024">
    <property type="entry name" value="D-XK_euk"/>
</dbReference>
<dbReference type="InterPro" id="IPR018485">
    <property type="entry name" value="FGGY_C"/>
</dbReference>
<dbReference type="InterPro" id="IPR018484">
    <property type="entry name" value="FGGY_N"/>
</dbReference>
<dbReference type="PANTHER" id="PTHR10196">
    <property type="entry name" value="SUGAR KINASE"/>
    <property type="match status" value="1"/>
</dbReference>
<dbReference type="PANTHER" id="PTHR10196:SF57">
    <property type="entry name" value="XYLULOSE KINASE"/>
    <property type="match status" value="1"/>
</dbReference>
<dbReference type="Pfam" id="PF02782">
    <property type="entry name" value="FGGY_C"/>
    <property type="match status" value="1"/>
</dbReference>
<dbReference type="Pfam" id="PF00370">
    <property type="entry name" value="FGGY_N"/>
    <property type="match status" value="1"/>
</dbReference>
<dbReference type="SUPFAM" id="SSF53067">
    <property type="entry name" value="Actin-like ATPase domain"/>
    <property type="match status" value="2"/>
</dbReference>
<sequence length="600" mass="68321">MLCSVIQRQTREVSNTMSLDSYYLGFDLSTQQLKCLAINQDLKIVHSETVEFEKDLPHYHTKKGVYIHGDTIECPVAMWLEALDLVLSKYREAKFPLNKVMAVSGSCQQHGSVYWSSQAESLLEQLNKKPEKDLLHYVSSVAFARQTAPNWQDHSTAKQCQEFEECIGGPEKMAQLTGSRAHFRFTGPQILKIAQLEPEAYEKTKTISLVSNFLTSILVGHLVELEEADACGMNLYDIRERKFSDELLHLIDSSSKDKTIRQKLMRAPMKNLIAGTICKYFIEKYGFNTNCKVSPMTGDNLATICSLPLRKNDVLVSLGTSTTVLLVTDKYHPSPNYHLFIHPTLPNHYMGMICYCNGSLARERIRDELNKERENNYEKTNDWTLFNQAVLDDSESSENELGVYFPLGEIVPSVKAINKRVIFNPKTGMIEREVAKFKDKRHDAKNIVESQALSCRVRISPLLSDSNASSQQRLNEDTIVKFDYDESPLRDYLNKRPERTFFVGGASKNDAIVKKFAQVIGATKGNFRLETPNSCALGGCYKAMWSLLYDSNKIAVPFDKFLNDNFPWHVMESISDVDNENWDRYNSKIVPLSELEKTLI</sequence>
<accession>P42826</accession>
<accession>D6VUX6</accession>
<reference key="1">
    <citation type="journal article" date="1997" name="Nature">
        <title>The nucleotide sequence of Saccharomyces cerevisiae chromosome VII.</title>
        <authorList>
            <person name="Tettelin H."/>
            <person name="Agostoni-Carbone M.L."/>
            <person name="Albermann K."/>
            <person name="Albers M."/>
            <person name="Arroyo J."/>
            <person name="Backes U."/>
            <person name="Barreiros T."/>
            <person name="Bertani I."/>
            <person name="Bjourson A.J."/>
            <person name="Brueckner M."/>
            <person name="Bruschi C.V."/>
            <person name="Carignani G."/>
            <person name="Castagnoli L."/>
            <person name="Cerdan E."/>
            <person name="Clemente M.L."/>
            <person name="Coblenz A."/>
            <person name="Coglievina M."/>
            <person name="Coissac E."/>
            <person name="Defoor E."/>
            <person name="Del Bino S."/>
            <person name="Delius H."/>
            <person name="Delneri D."/>
            <person name="de Wergifosse P."/>
            <person name="Dujon B."/>
            <person name="Durand P."/>
            <person name="Entian K.-D."/>
            <person name="Eraso P."/>
            <person name="Escribano V."/>
            <person name="Fabiani L."/>
            <person name="Fartmann B."/>
            <person name="Feroli F."/>
            <person name="Feuermann M."/>
            <person name="Frontali L."/>
            <person name="Garcia-Gonzalez M."/>
            <person name="Garcia-Saez M.I."/>
            <person name="Goffeau A."/>
            <person name="Guerreiro P."/>
            <person name="Hani J."/>
            <person name="Hansen M."/>
            <person name="Hebling U."/>
            <person name="Hernandez K."/>
            <person name="Heumann K."/>
            <person name="Hilger F."/>
            <person name="Hofmann B."/>
            <person name="Indge K.J."/>
            <person name="James C.M."/>
            <person name="Klima R."/>
            <person name="Koetter P."/>
            <person name="Kramer B."/>
            <person name="Kramer W."/>
            <person name="Lauquin G."/>
            <person name="Leuther H."/>
            <person name="Louis E.J."/>
            <person name="Maillier E."/>
            <person name="Marconi A."/>
            <person name="Martegani E."/>
            <person name="Mazon M.J."/>
            <person name="Mazzoni C."/>
            <person name="McReynolds A.D.K."/>
            <person name="Melchioretto P."/>
            <person name="Mewes H.-W."/>
            <person name="Minenkova O."/>
            <person name="Mueller-Auer S."/>
            <person name="Nawrocki A."/>
            <person name="Netter P."/>
            <person name="Neu R."/>
            <person name="Nombela C."/>
            <person name="Oliver S.G."/>
            <person name="Panzeri L."/>
            <person name="Paoluzi S."/>
            <person name="Plevani P."/>
            <person name="Portetelle D."/>
            <person name="Portillo F."/>
            <person name="Potier S."/>
            <person name="Purnelle B."/>
            <person name="Rieger M."/>
            <person name="Riles L."/>
            <person name="Rinaldi T."/>
            <person name="Robben J."/>
            <person name="Rodrigues-Pousada C."/>
            <person name="Rodriguez-Belmonte E."/>
            <person name="Rodriguez-Torres A.M."/>
            <person name="Rose M."/>
            <person name="Ruzzi M."/>
            <person name="Saliola M."/>
            <person name="Sanchez-Perez M."/>
            <person name="Schaefer B."/>
            <person name="Schaefer M."/>
            <person name="Scharfe M."/>
            <person name="Schmidheini T."/>
            <person name="Schreer A."/>
            <person name="Skala J."/>
            <person name="Souciet J.-L."/>
            <person name="Steensma H.Y."/>
            <person name="Talla E."/>
            <person name="Thierry A."/>
            <person name="Vandenbol M."/>
            <person name="van der Aart Q.J.M."/>
            <person name="Van Dyck L."/>
            <person name="Vanoni M."/>
            <person name="Verhasselt P."/>
            <person name="Voet M."/>
            <person name="Volckaert G."/>
            <person name="Wambutt R."/>
            <person name="Watson M.D."/>
            <person name="Weber N."/>
            <person name="Wedler E."/>
            <person name="Wedler H."/>
            <person name="Wipfli P."/>
            <person name="Wolf K."/>
            <person name="Wright L.F."/>
            <person name="Zaccaria P."/>
            <person name="Zimmermann M."/>
            <person name="Zollner A."/>
            <person name="Kleine K."/>
        </authorList>
    </citation>
    <scope>NUCLEOTIDE SEQUENCE [LARGE SCALE GENOMIC DNA]</scope>
    <source>
        <strain>ATCC 204508 / S288c</strain>
    </source>
</reference>
<reference key="2">
    <citation type="journal article" date="2014" name="G3 (Bethesda)">
        <title>The reference genome sequence of Saccharomyces cerevisiae: Then and now.</title>
        <authorList>
            <person name="Engel S.R."/>
            <person name="Dietrich F.S."/>
            <person name="Fisk D.G."/>
            <person name="Binkley G."/>
            <person name="Balakrishnan R."/>
            <person name="Costanzo M.C."/>
            <person name="Dwight S.S."/>
            <person name="Hitz B.C."/>
            <person name="Karra K."/>
            <person name="Nash R.S."/>
            <person name="Weng S."/>
            <person name="Wong E.D."/>
            <person name="Lloyd P."/>
            <person name="Skrzypek M.S."/>
            <person name="Miyasato S.R."/>
            <person name="Simison M."/>
            <person name="Cherry J.M."/>
        </authorList>
    </citation>
    <scope>GENOME REANNOTATION</scope>
    <source>
        <strain>ATCC 204508 / S288c</strain>
    </source>
</reference>
<reference key="3">
    <citation type="journal article" date="1995" name="Yeast">
        <title>The complete sequence of a 9037 bp DNA fragment of the right arm of Saccharomyces cerevisiae chromosome VII.</title>
        <authorList>
            <person name="Arroyo J."/>
            <person name="Garcia-Gonzalez M."/>
            <person name="Garcia-Saez M.I."/>
            <person name="Sanchez M."/>
            <person name="Nombela C."/>
        </authorList>
    </citation>
    <scope>NUCLEOTIDE SEQUENCE [GENOMIC DNA] OF 1-502</scope>
    <source>
        <strain>ATCC 204508 / S288c</strain>
    </source>
</reference>
<reference key="4">
    <citation type="journal article" date="1998" name="FEMS Microbiol. Lett.">
        <title>The YGR194c (XKS1) gene encodes the xylulokinase from the budding yeast Saccharomyces cerevisiae.</title>
        <authorList>
            <person name="Rodriguez-Pena J.M."/>
            <person name="Cid V.J."/>
            <person name="Arroyo J."/>
            <person name="Nombela C."/>
        </authorList>
    </citation>
    <scope>FUNCTION</scope>
    <scope>DISRUPTION PHENOTYPE</scope>
</reference>
<reference key="5">
    <citation type="journal article" date="2003" name="Nature">
        <title>Global analysis of protein localization in budding yeast.</title>
        <authorList>
            <person name="Huh W.-K."/>
            <person name="Falvo J.V."/>
            <person name="Gerke L.C."/>
            <person name="Carroll A.S."/>
            <person name="Howson R.W."/>
            <person name="Weissman J.S."/>
            <person name="O'Shea E.K."/>
        </authorList>
    </citation>
    <scope>SUBCELLULAR LOCATION [LARGE SCALE ANALYSIS]</scope>
</reference>
<reference key="6">
    <citation type="journal article" date="2003" name="Nature">
        <title>Global analysis of protein expression in yeast.</title>
        <authorList>
            <person name="Ghaemmaghami S."/>
            <person name="Huh W.-K."/>
            <person name="Bower K."/>
            <person name="Howson R.W."/>
            <person name="Belle A."/>
            <person name="Dephoure N."/>
            <person name="O'Shea E.K."/>
            <person name="Weissman J.S."/>
        </authorList>
    </citation>
    <scope>LEVEL OF PROTEIN EXPRESSION [LARGE SCALE ANALYSIS]</scope>
</reference>
<reference key="7">
    <citation type="journal article" date="2009" name="Science">
        <title>Global analysis of Cdk1 substrate phosphorylation sites provides insights into evolution.</title>
        <authorList>
            <person name="Holt L.J."/>
            <person name="Tuch B.B."/>
            <person name="Villen J."/>
            <person name="Johnson A.D."/>
            <person name="Gygi S.P."/>
            <person name="Morgan D.O."/>
        </authorList>
    </citation>
    <scope>PHOSPHORYLATION [LARGE SCALE ANALYSIS] AT SER-244</scope>
    <scope>IDENTIFICATION BY MASS SPECTROMETRY [LARGE SCALE ANALYSIS]</scope>
</reference>
<evidence type="ECO:0000250" key="1">
    <source>
        <dbReference type="UniProtKB" id="Q31KC7"/>
    </source>
</evidence>
<evidence type="ECO:0000250" key="2">
    <source>
        <dbReference type="UniProtKB" id="Q8L794"/>
    </source>
</evidence>
<evidence type="ECO:0000269" key="3">
    <source>
    </source>
</evidence>
<evidence type="ECO:0000269" key="4">
    <source>
    </source>
</evidence>
<evidence type="ECO:0000269" key="5">
    <source>
    </source>
</evidence>
<evidence type="ECO:0000303" key="6">
    <source>
    </source>
</evidence>
<evidence type="ECO:0000305" key="7"/>
<evidence type="ECO:0000305" key="8">
    <source>
    </source>
</evidence>
<evidence type="ECO:0007744" key="9">
    <source>
    </source>
</evidence>
<feature type="chain" id="PRO_0000059563" description="Xylulose kinase">
    <location>
        <begin position="1"/>
        <end position="600"/>
    </location>
</feature>
<feature type="binding site" evidence="1">
    <location>
        <begin position="79"/>
        <end position="82"/>
    </location>
    <ligand>
        <name>substrate</name>
    </ligand>
</feature>
<feature type="binding site" evidence="1">
    <location>
        <position position="299"/>
    </location>
    <ligand>
        <name>substrate</name>
    </ligand>
</feature>
<feature type="binding site" evidence="2">
    <location>
        <position position="358"/>
    </location>
    <ligand>
        <name>ATP</name>
        <dbReference type="ChEBI" id="CHEBI:30616"/>
    </ligand>
</feature>
<feature type="binding site" evidence="2">
    <location>
        <begin position="505"/>
        <end position="509"/>
    </location>
    <ligand>
        <name>ATP</name>
        <dbReference type="ChEBI" id="CHEBI:30616"/>
    </ligand>
</feature>
<feature type="modified residue" description="Phosphoserine" evidence="9">
    <location>
        <position position="244"/>
    </location>
</feature>
<feature type="sequence conflict" description="In Ref. 3; CAA57805." evidence="7" ref="3">
    <original>PERTFF</original>
    <variation>QKGLFL</variation>
    <location>
        <begin position="497"/>
        <end position="502"/>
    </location>
</feature>
<organism>
    <name type="scientific">Saccharomyces cerevisiae (strain ATCC 204508 / S288c)</name>
    <name type="common">Baker's yeast</name>
    <dbReference type="NCBI Taxonomy" id="559292"/>
    <lineage>
        <taxon>Eukaryota</taxon>
        <taxon>Fungi</taxon>
        <taxon>Dikarya</taxon>
        <taxon>Ascomycota</taxon>
        <taxon>Saccharomycotina</taxon>
        <taxon>Saccharomycetes</taxon>
        <taxon>Saccharomycetales</taxon>
        <taxon>Saccharomycetaceae</taxon>
        <taxon>Saccharomyces</taxon>
    </lineage>
</organism>
<comment type="function">
    <text evidence="5">Xylulose kinase necessary for growth in culture media with D-xylulose as the solecarbon source.</text>
</comment>
<comment type="catalytic activity">
    <reaction evidence="8">
        <text>D-xylulose + ATP = D-xylulose 5-phosphate + ADP + H(+)</text>
        <dbReference type="Rhea" id="RHEA:10964"/>
        <dbReference type="ChEBI" id="CHEBI:15378"/>
        <dbReference type="ChEBI" id="CHEBI:17140"/>
        <dbReference type="ChEBI" id="CHEBI:30616"/>
        <dbReference type="ChEBI" id="CHEBI:57737"/>
        <dbReference type="ChEBI" id="CHEBI:456216"/>
        <dbReference type="EC" id="2.7.1.17"/>
    </reaction>
</comment>
<comment type="subcellular location">
    <subcellularLocation>
        <location evidence="3">Cytoplasm</location>
    </subcellularLocation>
</comment>
<comment type="disruption phenotype">
    <text evidence="5">Impairs growth in culture media with D-xylulose as the sole carbon source.</text>
</comment>
<comment type="miscellaneous">
    <text evidence="4">Present with 3460 molecules/cell in log phase SD medium.</text>
</comment>
<comment type="similarity">
    <text evidence="7">Belongs to the FGGY kinase family.</text>
</comment>
<protein>
    <recommendedName>
        <fullName evidence="6">Xylulose kinase</fullName>
        <shortName evidence="6">Xylulokinase</shortName>
        <ecNumber evidence="8">2.7.1.17</ecNumber>
    </recommendedName>
</protein>